<evidence type="ECO:0000250" key="1">
    <source>
        <dbReference type="UniProtKB" id="P55319"/>
    </source>
</evidence>
<evidence type="ECO:0000255" key="2"/>
<evidence type="ECO:0000269" key="3">
    <source>
    </source>
</evidence>
<evidence type="ECO:0000303" key="4">
    <source>
    </source>
</evidence>
<evidence type="ECO:0000305" key="5"/>
<evidence type="ECO:0000305" key="6">
    <source>
    </source>
</evidence>
<dbReference type="GO" id="GO:0005576">
    <property type="term" value="C:extracellular region"/>
    <property type="evidence" value="ECO:0007669"/>
    <property type="project" value="UniProtKB-SubCell"/>
</dbReference>
<dbReference type="GO" id="GO:0005179">
    <property type="term" value="F:hormone activity"/>
    <property type="evidence" value="ECO:0007669"/>
    <property type="project" value="UniProtKB-KW"/>
</dbReference>
<dbReference type="GO" id="GO:0007629">
    <property type="term" value="P:flight behavior"/>
    <property type="evidence" value="ECO:0007669"/>
    <property type="project" value="UniProtKB-KW"/>
</dbReference>
<dbReference type="GO" id="GO:0007218">
    <property type="term" value="P:neuropeptide signaling pathway"/>
    <property type="evidence" value="ECO:0007669"/>
    <property type="project" value="UniProtKB-KW"/>
</dbReference>
<dbReference type="InterPro" id="IPR002047">
    <property type="entry name" value="Adipokinetic_hormone_CS"/>
</dbReference>
<dbReference type="PROSITE" id="PS00256">
    <property type="entry name" value="AKH"/>
    <property type="match status" value="1"/>
</dbReference>
<proteinExistence type="evidence at protein level"/>
<name>AKH_KARBO</name>
<reference evidence="5" key="1">
    <citation type="journal article" date="2012" name="Syst. Biol.">
        <title>Peptidomics-based phylogeny and biogeography of Mantophasmatodea (Hexapoda).</title>
        <authorList>
            <person name="Predel R."/>
            <person name="Neupert S."/>
            <person name="Huetteroth W."/>
            <person name="Kahnt J."/>
            <person name="Waidelich D."/>
            <person name="Roth S."/>
        </authorList>
    </citation>
    <scope>PROTEIN SEQUENCE</scope>
    <scope>PYROGLUTAMATE FORMATION AT GLN-1</scope>
    <scope>AMIDATION AT TRP-8</scope>
    <source>
        <tissue evidence="3">Corpora cardiaca</tissue>
    </source>
</reference>
<comment type="function">
    <text evidence="1">This hormone, released from cells in the corpora cardiaca, causes release of diglycerides from the fat body and stimulation of muscles to use these diglycerides as an energy source during energy-demanding processes.</text>
</comment>
<comment type="subcellular location">
    <subcellularLocation>
        <location evidence="6">Secreted</location>
    </subcellularLocation>
</comment>
<comment type="similarity">
    <text evidence="2">Belongs to the AKH/HRTH/RPCH family.</text>
</comment>
<protein>
    <recommendedName>
        <fullName evidence="4">Adipokinetic hormone</fullName>
        <shortName evidence="4">AKH</shortName>
    </recommendedName>
</protein>
<feature type="peptide" id="PRO_0000421655" description="Adipokinetic hormone" evidence="3">
    <location>
        <begin position="1"/>
        <end position="8"/>
    </location>
</feature>
<feature type="modified residue" description="Pyrrolidone carboxylic acid" evidence="3">
    <location>
        <position position="1"/>
    </location>
</feature>
<feature type="modified residue" description="Tryptophan amide" evidence="3">
    <location>
        <position position="8"/>
    </location>
</feature>
<keyword id="KW-0027">Amidation</keyword>
<keyword id="KW-0903">Direct protein sequencing</keyword>
<keyword id="KW-0286">Flight</keyword>
<keyword id="KW-0372">Hormone</keyword>
<keyword id="KW-0527">Neuropeptide</keyword>
<keyword id="KW-0873">Pyrrolidone carboxylic acid</keyword>
<keyword id="KW-0964">Secreted</keyword>
<sequence length="8" mass="948">QVNFTPGW</sequence>
<accession>B3A056</accession>
<organism>
    <name type="scientific">Karoophasma botterkloofense</name>
    <name type="common">Gladiator</name>
    <name type="synonym">Heel-walker</name>
    <dbReference type="NCBI Taxonomy" id="253132"/>
    <lineage>
        <taxon>Eukaryota</taxon>
        <taxon>Metazoa</taxon>
        <taxon>Ecdysozoa</taxon>
        <taxon>Arthropoda</taxon>
        <taxon>Hexapoda</taxon>
        <taxon>Insecta</taxon>
        <taxon>Pterygota</taxon>
        <taxon>Neoptera</taxon>
        <taxon>Polyneoptera</taxon>
        <taxon>Mantophasmatodea</taxon>
        <taxon>Austrophasmatidae</taxon>
        <taxon>Karoophasma</taxon>
    </lineage>
</organism>